<accession>B7I4T0</accession>
<feature type="chain" id="PRO_1000121567" description="Large ribosomal subunit protein bL28">
    <location>
        <begin position="1"/>
        <end position="78"/>
    </location>
</feature>
<feature type="turn" evidence="3">
    <location>
        <begin position="6"/>
        <end position="8"/>
    </location>
</feature>
<feature type="strand" evidence="3">
    <location>
        <begin position="13"/>
        <end position="18"/>
    </location>
</feature>
<feature type="strand" evidence="3">
    <location>
        <begin position="24"/>
        <end position="29"/>
    </location>
</feature>
<feature type="strand" evidence="3">
    <location>
        <begin position="33"/>
        <end position="40"/>
    </location>
</feature>
<feature type="turn" evidence="3">
    <location>
        <begin position="41"/>
        <end position="44"/>
    </location>
</feature>
<feature type="strand" evidence="3">
    <location>
        <begin position="45"/>
        <end position="52"/>
    </location>
</feature>
<feature type="helix" evidence="3">
    <location>
        <begin position="53"/>
        <end position="62"/>
    </location>
</feature>
<feature type="helix" evidence="3">
    <location>
        <begin position="64"/>
        <end position="74"/>
    </location>
</feature>
<gene>
    <name evidence="1" type="primary">rpmB</name>
    <name type="ordered locus">AB57_0531</name>
</gene>
<name>RL28_ACIB5</name>
<reference key="1">
    <citation type="journal article" date="2008" name="J. Bacteriol.">
        <title>Comparative genome sequence analysis of multidrug-resistant Acinetobacter baumannii.</title>
        <authorList>
            <person name="Adams M.D."/>
            <person name="Goglin K."/>
            <person name="Molyneaux N."/>
            <person name="Hujer K.M."/>
            <person name="Lavender H."/>
            <person name="Jamison J.J."/>
            <person name="MacDonald I.J."/>
            <person name="Martin K.M."/>
            <person name="Russo T."/>
            <person name="Campagnari A.A."/>
            <person name="Hujer A.M."/>
            <person name="Bonomo R.A."/>
            <person name="Gill S.R."/>
        </authorList>
    </citation>
    <scope>NUCLEOTIDE SEQUENCE [LARGE SCALE GENOMIC DNA]</scope>
    <source>
        <strain>AB0057</strain>
    </source>
</reference>
<protein>
    <recommendedName>
        <fullName evidence="1">Large ribosomal subunit protein bL28</fullName>
    </recommendedName>
    <alternativeName>
        <fullName evidence="2">50S ribosomal protein L28</fullName>
    </alternativeName>
</protein>
<proteinExistence type="evidence at protein level"/>
<sequence>MSKVCQVTGKRPVVGNNVSHANNKTKRRFEPNLHHHRFWLESEKRFVRLRLTTKGMRIIDKLGIEKVVADLRAQGQKI</sequence>
<keyword id="KW-0002">3D-structure</keyword>
<keyword id="KW-0687">Ribonucleoprotein</keyword>
<keyword id="KW-0689">Ribosomal protein</keyword>
<evidence type="ECO:0000255" key="1">
    <source>
        <dbReference type="HAMAP-Rule" id="MF_00373"/>
    </source>
</evidence>
<evidence type="ECO:0000305" key="2"/>
<evidence type="ECO:0007829" key="3">
    <source>
        <dbReference type="PDB" id="7M4V"/>
    </source>
</evidence>
<dbReference type="EMBL" id="CP001182">
    <property type="protein sequence ID" value="ACJ39952.1"/>
    <property type="molecule type" value="Genomic_DNA"/>
</dbReference>
<dbReference type="RefSeq" id="WP_000048256.1">
    <property type="nucleotide sequence ID" value="NC_011586.2"/>
</dbReference>
<dbReference type="PDB" id="7M4V">
    <property type="method" value="EM"/>
    <property type="resolution" value="2.54 A"/>
    <property type="chains" value="W=1-78"/>
</dbReference>
<dbReference type="PDBsum" id="7M4V"/>
<dbReference type="SMR" id="B7I4T0"/>
<dbReference type="IntAct" id="B7I4T0">
    <property type="interactions" value="2"/>
</dbReference>
<dbReference type="GeneID" id="97177253"/>
<dbReference type="KEGG" id="abn:AB57_0531"/>
<dbReference type="HOGENOM" id="CLU_064548_3_1_6"/>
<dbReference type="Proteomes" id="UP000007094">
    <property type="component" value="Chromosome"/>
</dbReference>
<dbReference type="GO" id="GO:0022625">
    <property type="term" value="C:cytosolic large ribosomal subunit"/>
    <property type="evidence" value="ECO:0007669"/>
    <property type="project" value="TreeGrafter"/>
</dbReference>
<dbReference type="GO" id="GO:0003735">
    <property type="term" value="F:structural constituent of ribosome"/>
    <property type="evidence" value="ECO:0007669"/>
    <property type="project" value="InterPro"/>
</dbReference>
<dbReference type="GO" id="GO:0006412">
    <property type="term" value="P:translation"/>
    <property type="evidence" value="ECO:0007669"/>
    <property type="project" value="UniProtKB-UniRule"/>
</dbReference>
<dbReference type="FunFam" id="2.30.170.40:FF:000001">
    <property type="entry name" value="50S ribosomal protein L28"/>
    <property type="match status" value="1"/>
</dbReference>
<dbReference type="Gene3D" id="2.30.170.40">
    <property type="entry name" value="Ribosomal protein L28/L24"/>
    <property type="match status" value="1"/>
</dbReference>
<dbReference type="HAMAP" id="MF_00373">
    <property type="entry name" value="Ribosomal_bL28"/>
    <property type="match status" value="1"/>
</dbReference>
<dbReference type="InterPro" id="IPR026569">
    <property type="entry name" value="Ribosomal_bL28"/>
</dbReference>
<dbReference type="InterPro" id="IPR034704">
    <property type="entry name" value="Ribosomal_bL28/bL31-like_sf"/>
</dbReference>
<dbReference type="InterPro" id="IPR001383">
    <property type="entry name" value="Ribosomal_bL28_bact-type"/>
</dbReference>
<dbReference type="InterPro" id="IPR037147">
    <property type="entry name" value="Ribosomal_bL28_sf"/>
</dbReference>
<dbReference type="NCBIfam" id="TIGR00009">
    <property type="entry name" value="L28"/>
    <property type="match status" value="1"/>
</dbReference>
<dbReference type="PANTHER" id="PTHR13528">
    <property type="entry name" value="39S RIBOSOMAL PROTEIN L28, MITOCHONDRIAL"/>
    <property type="match status" value="1"/>
</dbReference>
<dbReference type="PANTHER" id="PTHR13528:SF2">
    <property type="entry name" value="LARGE RIBOSOMAL SUBUNIT PROTEIN BL28M"/>
    <property type="match status" value="1"/>
</dbReference>
<dbReference type="Pfam" id="PF00830">
    <property type="entry name" value="Ribosomal_L28"/>
    <property type="match status" value="1"/>
</dbReference>
<dbReference type="SUPFAM" id="SSF143800">
    <property type="entry name" value="L28p-like"/>
    <property type="match status" value="1"/>
</dbReference>
<comment type="similarity">
    <text evidence="1">Belongs to the bacterial ribosomal protein bL28 family.</text>
</comment>
<organism>
    <name type="scientific">Acinetobacter baumannii (strain AB0057)</name>
    <dbReference type="NCBI Taxonomy" id="480119"/>
    <lineage>
        <taxon>Bacteria</taxon>
        <taxon>Pseudomonadati</taxon>
        <taxon>Pseudomonadota</taxon>
        <taxon>Gammaproteobacteria</taxon>
        <taxon>Moraxellales</taxon>
        <taxon>Moraxellaceae</taxon>
        <taxon>Acinetobacter</taxon>
        <taxon>Acinetobacter calcoaceticus/baumannii complex</taxon>
    </lineage>
</organism>